<gene>
    <name type="ordered locus">VC_2264</name>
</gene>
<protein>
    <recommendedName>
        <fullName evidence="1">UPF0325 protein VC_2264</fullName>
    </recommendedName>
</protein>
<keyword id="KW-1185">Reference proteome</keyword>
<accession>Q9KPU8</accession>
<reference key="1">
    <citation type="journal article" date="2000" name="Nature">
        <title>DNA sequence of both chromosomes of the cholera pathogen Vibrio cholerae.</title>
        <authorList>
            <person name="Heidelberg J.F."/>
            <person name="Eisen J.A."/>
            <person name="Nelson W.C."/>
            <person name="Clayton R.A."/>
            <person name="Gwinn M.L."/>
            <person name="Dodson R.J."/>
            <person name="Haft D.H."/>
            <person name="Hickey E.K."/>
            <person name="Peterson J.D."/>
            <person name="Umayam L.A."/>
            <person name="Gill S.R."/>
            <person name="Nelson K.E."/>
            <person name="Read T.D."/>
            <person name="Tettelin H."/>
            <person name="Richardson D.L."/>
            <person name="Ermolaeva M.D."/>
            <person name="Vamathevan J.J."/>
            <person name="Bass S."/>
            <person name="Qin H."/>
            <person name="Dragoi I."/>
            <person name="Sellers P."/>
            <person name="McDonald L.A."/>
            <person name="Utterback T.R."/>
            <person name="Fleischmann R.D."/>
            <person name="Nierman W.C."/>
            <person name="White O."/>
            <person name="Salzberg S.L."/>
            <person name="Smith H.O."/>
            <person name="Colwell R.R."/>
            <person name="Mekalanos J.J."/>
            <person name="Venter J.C."/>
            <person name="Fraser C.M."/>
        </authorList>
    </citation>
    <scope>NUCLEOTIDE SEQUENCE [LARGE SCALE GENOMIC DNA]</scope>
    <source>
        <strain>ATCC 39315 / El Tor Inaba N16961</strain>
    </source>
</reference>
<sequence length="127" mass="14740">MFPHLVGLGINEPTQIERYSLRQEAHKDVLKIYFKKQKGELFAKSVKFKYPRQIKNVLVDSGSHQYKEVTEINRNLTLVIDELNKITKPEVMGEVDVKQKILNDLRHLEKVVASKIAEIEADLQKLN</sequence>
<comment type="similarity">
    <text evidence="1">Belongs to the UPF0325 family.</text>
</comment>
<comment type="sequence caution" evidence="2">
    <conflict type="erroneous initiation">
        <sequence resource="EMBL-CDS" id="AAF95408"/>
    </conflict>
</comment>
<organism>
    <name type="scientific">Vibrio cholerae serotype O1 (strain ATCC 39315 / El Tor Inaba N16961)</name>
    <dbReference type="NCBI Taxonomy" id="243277"/>
    <lineage>
        <taxon>Bacteria</taxon>
        <taxon>Pseudomonadati</taxon>
        <taxon>Pseudomonadota</taxon>
        <taxon>Gammaproteobacteria</taxon>
        <taxon>Vibrionales</taxon>
        <taxon>Vibrionaceae</taxon>
        <taxon>Vibrio</taxon>
    </lineage>
</organism>
<proteinExistence type="inferred from homology"/>
<evidence type="ECO:0000255" key="1">
    <source>
        <dbReference type="HAMAP-Rule" id="MF_01519"/>
    </source>
</evidence>
<evidence type="ECO:0000305" key="2"/>
<dbReference type="EMBL" id="AE003852">
    <property type="protein sequence ID" value="AAF95408.1"/>
    <property type="status" value="ALT_INIT"/>
    <property type="molecule type" value="Genomic_DNA"/>
</dbReference>
<dbReference type="PIR" id="G82097">
    <property type="entry name" value="G82097"/>
</dbReference>
<dbReference type="RefSeq" id="NP_231895.1">
    <property type="nucleotide sequence ID" value="NC_002505.1"/>
</dbReference>
<dbReference type="RefSeq" id="WP_000483924.1">
    <property type="nucleotide sequence ID" value="NZ_LT906614.1"/>
</dbReference>
<dbReference type="SMR" id="Q9KPU8"/>
<dbReference type="STRING" id="243277.VC_2264"/>
<dbReference type="DNASU" id="2613186"/>
<dbReference type="EnsemblBacteria" id="AAF95408">
    <property type="protein sequence ID" value="AAF95408"/>
    <property type="gene ID" value="VC_2264"/>
</dbReference>
<dbReference type="KEGG" id="vch:VC_2264"/>
<dbReference type="PATRIC" id="fig|243277.26.peg.2159"/>
<dbReference type="eggNOG" id="ENOG502ZBV4">
    <property type="taxonomic scope" value="Bacteria"/>
</dbReference>
<dbReference type="HOGENOM" id="CLU_136774_0_0_6"/>
<dbReference type="Proteomes" id="UP000000584">
    <property type="component" value="Chromosome 1"/>
</dbReference>
<dbReference type="HAMAP" id="MF_01519">
    <property type="entry name" value="UPF0325"/>
    <property type="match status" value="1"/>
</dbReference>
<dbReference type="InterPro" id="IPR020911">
    <property type="entry name" value="UPF0325"/>
</dbReference>
<dbReference type="NCBIfam" id="NF010213">
    <property type="entry name" value="PRK13677.1"/>
    <property type="match status" value="1"/>
</dbReference>
<dbReference type="Pfam" id="PF11944">
    <property type="entry name" value="DUF3461"/>
    <property type="match status" value="1"/>
</dbReference>
<feature type="chain" id="PRO_0000211846" description="UPF0325 protein VC_2264">
    <location>
        <begin position="1"/>
        <end position="127"/>
    </location>
</feature>
<name>Y2264_VIBCH</name>